<protein>
    <recommendedName>
        <fullName evidence="1">Deoxyguanosinetriphosphate triphosphohydrolase-like protein</fullName>
    </recommendedName>
</protein>
<accession>Q1RGY2</accession>
<organism>
    <name type="scientific">Rickettsia bellii (strain RML369-C)</name>
    <dbReference type="NCBI Taxonomy" id="336407"/>
    <lineage>
        <taxon>Bacteria</taxon>
        <taxon>Pseudomonadati</taxon>
        <taxon>Pseudomonadota</taxon>
        <taxon>Alphaproteobacteria</taxon>
        <taxon>Rickettsiales</taxon>
        <taxon>Rickettsiaceae</taxon>
        <taxon>Rickettsieae</taxon>
        <taxon>Rickettsia</taxon>
        <taxon>belli group</taxon>
    </lineage>
</organism>
<keyword id="KW-0378">Hydrolase</keyword>
<reference key="1">
    <citation type="journal article" date="2006" name="PLoS Genet.">
        <title>Genome sequence of Rickettsia bellii illuminates the role of amoebae in gene exchanges between intracellular pathogens.</title>
        <authorList>
            <person name="Ogata H."/>
            <person name="La Scola B."/>
            <person name="Audic S."/>
            <person name="Renesto P."/>
            <person name="Blanc G."/>
            <person name="Robert C."/>
            <person name="Fournier P.-E."/>
            <person name="Claverie J.-M."/>
            <person name="Raoult D."/>
        </authorList>
    </citation>
    <scope>NUCLEOTIDE SEQUENCE [LARGE SCALE GENOMIC DNA]</scope>
    <source>
        <strain>RML369-C</strain>
    </source>
</reference>
<comment type="similarity">
    <text evidence="1">Belongs to the dGTPase family. Type 2 subfamily.</text>
</comment>
<feature type="chain" id="PRO_0000272407" description="Deoxyguanosinetriphosphate triphosphohydrolase-like protein">
    <location>
        <begin position="1"/>
        <end position="383"/>
    </location>
</feature>
<feature type="domain" description="HD" evidence="2">
    <location>
        <begin position="62"/>
        <end position="198"/>
    </location>
</feature>
<sequence>MLASYASDPLKSRGRLYREIPTSYRNEFERDRDRIIHTNAFRRLQYKTQVFINHEGDHYRNRLTHSLEVSTVARSIANTLNLSSDLAETIALAHDLGHTPFGHAGERSLNECMKEHNGFSHNAQSLKILTLLEKRYAAYRGVNLTWEVLEGIVKHNGPISGEVNEYIEEYNSQNDLELNTYASAEAQIAALADDISYISHDLEDSIGAKIIDFNNLAELKYIDQHVFELKSKYKNISSSCLIYEVVRKLMHELITDLLWQTKTNINKEKITHIDEIRNLNYQIVDFTEKTNERIKEIKKFLHERVYKSNRITAISLKCTKIVQGLFKVYMEDVNLLPVNWKIQIDSNNPNSKARIIADYIAGMTDRFAIQEYNQLCSLNFNNI</sequence>
<dbReference type="EMBL" id="CP000087">
    <property type="protein sequence ID" value="ABE05382.1"/>
    <property type="molecule type" value="Genomic_DNA"/>
</dbReference>
<dbReference type="RefSeq" id="WP_011477952.1">
    <property type="nucleotide sequence ID" value="NC_007940.1"/>
</dbReference>
<dbReference type="SMR" id="Q1RGY2"/>
<dbReference type="KEGG" id="rbe:RBE_1301"/>
<dbReference type="eggNOG" id="COG0232">
    <property type="taxonomic scope" value="Bacteria"/>
</dbReference>
<dbReference type="HOGENOM" id="CLU_028163_1_0_5"/>
<dbReference type="OrthoDB" id="9803619at2"/>
<dbReference type="Proteomes" id="UP000001951">
    <property type="component" value="Chromosome"/>
</dbReference>
<dbReference type="GO" id="GO:0008832">
    <property type="term" value="F:dGTPase activity"/>
    <property type="evidence" value="ECO:0007669"/>
    <property type="project" value="TreeGrafter"/>
</dbReference>
<dbReference type="GO" id="GO:0006203">
    <property type="term" value="P:dGTP catabolic process"/>
    <property type="evidence" value="ECO:0007669"/>
    <property type="project" value="TreeGrafter"/>
</dbReference>
<dbReference type="CDD" id="cd00077">
    <property type="entry name" value="HDc"/>
    <property type="match status" value="1"/>
</dbReference>
<dbReference type="Gene3D" id="1.10.3210.10">
    <property type="entry name" value="Hypothetical protein af1432"/>
    <property type="match status" value="1"/>
</dbReference>
<dbReference type="HAMAP" id="MF_01212">
    <property type="entry name" value="dGTPase_type2"/>
    <property type="match status" value="1"/>
</dbReference>
<dbReference type="InterPro" id="IPR006261">
    <property type="entry name" value="dGTPase"/>
</dbReference>
<dbReference type="InterPro" id="IPR050135">
    <property type="entry name" value="dGTPase-like"/>
</dbReference>
<dbReference type="InterPro" id="IPR023023">
    <property type="entry name" value="dNTPase_2"/>
</dbReference>
<dbReference type="InterPro" id="IPR003607">
    <property type="entry name" value="HD/PDEase_dom"/>
</dbReference>
<dbReference type="InterPro" id="IPR006674">
    <property type="entry name" value="HD_domain"/>
</dbReference>
<dbReference type="InterPro" id="IPR026875">
    <property type="entry name" value="PHydrolase_assoc_dom"/>
</dbReference>
<dbReference type="NCBIfam" id="TIGR01353">
    <property type="entry name" value="dGTP_triPase"/>
    <property type="match status" value="1"/>
</dbReference>
<dbReference type="NCBIfam" id="NF002326">
    <property type="entry name" value="PRK01286.1-1"/>
    <property type="match status" value="1"/>
</dbReference>
<dbReference type="NCBIfam" id="NF002330">
    <property type="entry name" value="PRK01286.1-5"/>
    <property type="match status" value="1"/>
</dbReference>
<dbReference type="PANTHER" id="PTHR11373:SF43">
    <property type="entry name" value="DEOXYGUANOSINETRIPHOSPHATE TRIPHOSPHOHYDROLASE-LIKE PROTEIN"/>
    <property type="match status" value="1"/>
</dbReference>
<dbReference type="PANTHER" id="PTHR11373">
    <property type="entry name" value="DEOXYNUCLEOSIDE TRIPHOSPHATE TRIPHOSPHOHYDROLASE"/>
    <property type="match status" value="1"/>
</dbReference>
<dbReference type="Pfam" id="PF01966">
    <property type="entry name" value="HD"/>
    <property type="match status" value="1"/>
</dbReference>
<dbReference type="Pfam" id="PF13286">
    <property type="entry name" value="HD_assoc"/>
    <property type="match status" value="1"/>
</dbReference>
<dbReference type="SMART" id="SM00471">
    <property type="entry name" value="HDc"/>
    <property type="match status" value="1"/>
</dbReference>
<dbReference type="SUPFAM" id="SSF109604">
    <property type="entry name" value="HD-domain/PDEase-like"/>
    <property type="match status" value="1"/>
</dbReference>
<dbReference type="PROSITE" id="PS51831">
    <property type="entry name" value="HD"/>
    <property type="match status" value="1"/>
</dbReference>
<gene>
    <name type="ordered locus">RBE_1301</name>
</gene>
<name>DGTL1_RICBR</name>
<proteinExistence type="inferred from homology"/>
<evidence type="ECO:0000255" key="1">
    <source>
        <dbReference type="HAMAP-Rule" id="MF_01212"/>
    </source>
</evidence>
<evidence type="ECO:0000255" key="2">
    <source>
        <dbReference type="PROSITE-ProRule" id="PRU01175"/>
    </source>
</evidence>